<feature type="chain" id="PRO_0000211638" description="Chaperone protein TorD">
    <location>
        <begin position="1"/>
        <end position="216"/>
    </location>
</feature>
<reference key="1">
    <citation type="journal article" date="2005" name="Science">
        <title>Life at depth: Photobacterium profundum genome sequence and expression analysis.</title>
        <authorList>
            <person name="Vezzi A."/>
            <person name="Campanaro S."/>
            <person name="D'Angelo M."/>
            <person name="Simonato F."/>
            <person name="Vitulo N."/>
            <person name="Lauro F.M."/>
            <person name="Cestaro A."/>
            <person name="Malacrida G."/>
            <person name="Simionati B."/>
            <person name="Cannata N."/>
            <person name="Romualdi C."/>
            <person name="Bartlett D.H."/>
            <person name="Valle G."/>
        </authorList>
    </citation>
    <scope>NUCLEOTIDE SEQUENCE [LARGE SCALE GENOMIC DNA]</scope>
    <source>
        <strain>ATCC BAA-1253 / SS9</strain>
    </source>
</reference>
<comment type="function">
    <text evidence="1">Involved in the biogenesis of TorA. Acts on TorA before the insertion of the molybdenum cofactor and, as a result, probably favors a conformation of the apoenzyme that is competent for acquiring the cofactor.</text>
</comment>
<comment type="subcellular location">
    <subcellularLocation>
        <location evidence="1">Cytoplasm</location>
    </subcellularLocation>
</comment>
<comment type="similarity">
    <text evidence="1">Belongs to the TorD/DmsD family. TorD subfamily.</text>
</comment>
<evidence type="ECO:0000255" key="1">
    <source>
        <dbReference type="HAMAP-Rule" id="MF_01150"/>
    </source>
</evidence>
<accession>Q6LS21</accession>
<protein>
    <recommendedName>
        <fullName evidence="1">Chaperone protein TorD</fullName>
    </recommendedName>
</protein>
<sequence>MQEFIAFNEQRAEIYWWMSSLLARELTNEDVTEYHGDEMFTFLSGLGMTPELKEPVEAFRNAINTLKTREDAQLELAADFCGLFLSTPKSGALPYASIYVGESGLLNDKPAQDMNVLMEEYGIAQRKEFNEPADHIAVELDFMGNLIIQANQELDEEKREALMQAQLAFVNDMLLNWIPAFAQSCKARDDFGFYTASVNLLVAFCQLDAAFLLGEE</sequence>
<gene>
    <name evidence="1" type="primary">torD</name>
    <name type="ordered locus">PBPRA1494</name>
</gene>
<dbReference type="EMBL" id="CR378667">
    <property type="protein sequence ID" value="CAG19905.1"/>
    <property type="molecule type" value="Genomic_DNA"/>
</dbReference>
<dbReference type="RefSeq" id="WP_011218226.1">
    <property type="nucleotide sequence ID" value="NC_006370.1"/>
</dbReference>
<dbReference type="SMR" id="Q6LS21"/>
<dbReference type="STRING" id="298386.PBPRA1494"/>
<dbReference type="KEGG" id="ppr:PBPRA1494"/>
<dbReference type="eggNOG" id="COG3381">
    <property type="taxonomic scope" value="Bacteria"/>
</dbReference>
<dbReference type="HOGENOM" id="CLU_077650_4_0_6"/>
<dbReference type="Proteomes" id="UP000000593">
    <property type="component" value="Chromosome 1"/>
</dbReference>
<dbReference type="GO" id="GO:0005737">
    <property type="term" value="C:cytoplasm"/>
    <property type="evidence" value="ECO:0007669"/>
    <property type="project" value="UniProtKB-SubCell"/>
</dbReference>
<dbReference type="GO" id="GO:0051259">
    <property type="term" value="P:protein complex oligomerization"/>
    <property type="evidence" value="ECO:0007669"/>
    <property type="project" value="InterPro"/>
</dbReference>
<dbReference type="GO" id="GO:0006457">
    <property type="term" value="P:protein folding"/>
    <property type="evidence" value="ECO:0007669"/>
    <property type="project" value="UniProtKB-UniRule"/>
</dbReference>
<dbReference type="Gene3D" id="1.20.120.1820">
    <property type="match status" value="1"/>
</dbReference>
<dbReference type="Gene3D" id="1.20.1280.20">
    <property type="entry name" value="HscB, C-terminal domain"/>
    <property type="match status" value="1"/>
</dbReference>
<dbReference type="HAMAP" id="MF_01150">
    <property type="entry name" value="TorD"/>
    <property type="match status" value="1"/>
</dbReference>
<dbReference type="InterPro" id="IPR023069">
    <property type="entry name" value="Chaperone_TorD"/>
</dbReference>
<dbReference type="InterPro" id="IPR020945">
    <property type="entry name" value="DMSO/NO3_reduct_chaperone"/>
</dbReference>
<dbReference type="InterPro" id="IPR036386">
    <property type="entry name" value="HscB_C_sf"/>
</dbReference>
<dbReference type="InterPro" id="IPR036411">
    <property type="entry name" value="TorD-like_sf"/>
</dbReference>
<dbReference type="InterPro" id="IPR050289">
    <property type="entry name" value="TorD/DmsD_chaperones"/>
</dbReference>
<dbReference type="NCBIfam" id="NF003442">
    <property type="entry name" value="PRK04976.1"/>
    <property type="match status" value="1"/>
</dbReference>
<dbReference type="PANTHER" id="PTHR34227:SF11">
    <property type="entry name" value="CHAPERONE PROTEIN TORD"/>
    <property type="match status" value="1"/>
</dbReference>
<dbReference type="PANTHER" id="PTHR34227">
    <property type="entry name" value="CHAPERONE PROTEIN YCDY"/>
    <property type="match status" value="1"/>
</dbReference>
<dbReference type="Pfam" id="PF02613">
    <property type="entry name" value="Nitrate_red_del"/>
    <property type="match status" value="1"/>
</dbReference>
<dbReference type="SUPFAM" id="SSF89155">
    <property type="entry name" value="TorD-like"/>
    <property type="match status" value="1"/>
</dbReference>
<name>TORD_PHOPR</name>
<proteinExistence type="inferred from homology"/>
<organism>
    <name type="scientific">Photobacterium profundum (strain SS9)</name>
    <dbReference type="NCBI Taxonomy" id="298386"/>
    <lineage>
        <taxon>Bacteria</taxon>
        <taxon>Pseudomonadati</taxon>
        <taxon>Pseudomonadota</taxon>
        <taxon>Gammaproteobacteria</taxon>
        <taxon>Vibrionales</taxon>
        <taxon>Vibrionaceae</taxon>
        <taxon>Photobacterium</taxon>
    </lineage>
</organism>
<keyword id="KW-0143">Chaperone</keyword>
<keyword id="KW-0963">Cytoplasm</keyword>
<keyword id="KW-1185">Reference proteome</keyword>